<comment type="function">
    <text evidence="4 5">Seems to function as a defense factor. Thionins are small plant proteins which are toxic to animal cells. They seem to exert their toxic effect at the level of the cell membrane. Their precise function is not known.</text>
</comment>
<comment type="subcellular location">
    <subcellularLocation>
        <location evidence="6">Secreted</location>
    </subcellularLocation>
</comment>
<comment type="tissue specificity">
    <text evidence="3 5">Detected in rosette leaves and at a very high level in flowers and in siliques.</text>
</comment>
<comment type="induction">
    <text evidence="3 5">Highly induced in seedlings by pathogens, wounding, silver nitrate, and methyl jasmonate.</text>
</comment>
<comment type="similarity">
    <text evidence="6">Belongs to the plant thionin (TC 1.C.44) family.</text>
</comment>
<comment type="sequence caution" evidence="6">
    <conflict type="erroneous initiation">
        <sequence resource="EMBL-CDS" id="AAG51790"/>
    </conflict>
    <text>Truncated N-terminus.</text>
</comment>
<comment type="sequence caution" evidence="6">
    <conflict type="erroneous initiation">
        <sequence resource="EMBL-CDS" id="AAM63655"/>
    </conflict>
    <text>Truncated N-terminus.</text>
</comment>
<organism>
    <name type="scientific">Arabidopsis thaliana</name>
    <name type="common">Mouse-ear cress</name>
    <dbReference type="NCBI Taxonomy" id="3702"/>
    <lineage>
        <taxon>Eukaryota</taxon>
        <taxon>Viridiplantae</taxon>
        <taxon>Streptophyta</taxon>
        <taxon>Embryophyta</taxon>
        <taxon>Tracheophyta</taxon>
        <taxon>Spermatophyta</taxon>
        <taxon>Magnoliopsida</taxon>
        <taxon>eudicotyledons</taxon>
        <taxon>Gunneridae</taxon>
        <taxon>Pentapetalae</taxon>
        <taxon>rosids</taxon>
        <taxon>malvids</taxon>
        <taxon>Brassicales</taxon>
        <taxon>Brassicaceae</taxon>
        <taxon>Camelineae</taxon>
        <taxon>Arabidopsis</taxon>
    </lineage>
</organism>
<sequence>MKGRILILSLLIMSLVMAQVQVEAKICCPSNQARNGYSVCRIRFSKGRCMQVSGCQNSDTCPRGWVNAILENSADATNEHCKLGCETSVCGAMNTLQNSDASEIVNGASEQCAKGCSIFCTKSYVVPPGPPKLL</sequence>
<protein>
    <recommendedName>
        <fullName>Thionin-2.1</fullName>
    </recommendedName>
</protein>
<accession>Q42596</accession>
<accession>Q8LCH6</accession>
<accession>Q9C7S9</accession>
<name>THN21_ARATH</name>
<gene>
    <name type="primary">THI2.1</name>
    <name type="ordered locus">At1g72260</name>
    <name type="ORF">T9N14.13</name>
</gene>
<proteinExistence type="evidence at transcript level"/>
<reference key="1">
    <citation type="journal article" date="1995" name="Plant Physiol.">
        <title>An Arabidopsis thaliana thionin gene is inducible via a signal transduction pathway different from that for pathogenesis-related proteins.</title>
        <authorList>
            <person name="Epple P."/>
            <person name="Apel K."/>
            <person name="Bohlmann H."/>
        </authorList>
    </citation>
    <scope>NUCLEOTIDE SEQUENCE [MRNA]</scope>
    <scope>TISSUE SPECIFICITY</scope>
    <scope>INDUCTION</scope>
    <source>
        <strain>cv. Columbia</strain>
    </source>
</reference>
<reference key="2">
    <citation type="journal article" date="2000" name="Nature">
        <title>Sequence and analysis of chromosome 1 of the plant Arabidopsis thaliana.</title>
        <authorList>
            <person name="Theologis A."/>
            <person name="Ecker J.R."/>
            <person name="Palm C.J."/>
            <person name="Federspiel N.A."/>
            <person name="Kaul S."/>
            <person name="White O."/>
            <person name="Alonso J."/>
            <person name="Altafi H."/>
            <person name="Araujo R."/>
            <person name="Bowman C.L."/>
            <person name="Brooks S.Y."/>
            <person name="Buehler E."/>
            <person name="Chan A."/>
            <person name="Chao Q."/>
            <person name="Chen H."/>
            <person name="Cheuk R.F."/>
            <person name="Chin C.W."/>
            <person name="Chung M.K."/>
            <person name="Conn L."/>
            <person name="Conway A.B."/>
            <person name="Conway A.R."/>
            <person name="Creasy T.H."/>
            <person name="Dewar K."/>
            <person name="Dunn P."/>
            <person name="Etgu P."/>
            <person name="Feldblyum T.V."/>
            <person name="Feng J.-D."/>
            <person name="Fong B."/>
            <person name="Fujii C.Y."/>
            <person name="Gill J.E."/>
            <person name="Goldsmith A.D."/>
            <person name="Haas B."/>
            <person name="Hansen N.F."/>
            <person name="Hughes B."/>
            <person name="Huizar L."/>
            <person name="Hunter J.L."/>
            <person name="Jenkins J."/>
            <person name="Johnson-Hopson C."/>
            <person name="Khan S."/>
            <person name="Khaykin E."/>
            <person name="Kim C.J."/>
            <person name="Koo H.L."/>
            <person name="Kremenetskaia I."/>
            <person name="Kurtz D.B."/>
            <person name="Kwan A."/>
            <person name="Lam B."/>
            <person name="Langin-Hooper S."/>
            <person name="Lee A."/>
            <person name="Lee J.M."/>
            <person name="Lenz C.A."/>
            <person name="Li J.H."/>
            <person name="Li Y.-P."/>
            <person name="Lin X."/>
            <person name="Liu S.X."/>
            <person name="Liu Z.A."/>
            <person name="Luros J.S."/>
            <person name="Maiti R."/>
            <person name="Marziali A."/>
            <person name="Militscher J."/>
            <person name="Miranda M."/>
            <person name="Nguyen M."/>
            <person name="Nierman W.C."/>
            <person name="Osborne B.I."/>
            <person name="Pai G."/>
            <person name="Peterson J."/>
            <person name="Pham P.K."/>
            <person name="Rizzo M."/>
            <person name="Rooney T."/>
            <person name="Rowley D."/>
            <person name="Sakano H."/>
            <person name="Salzberg S.L."/>
            <person name="Schwartz J.R."/>
            <person name="Shinn P."/>
            <person name="Southwick A.M."/>
            <person name="Sun H."/>
            <person name="Tallon L.J."/>
            <person name="Tambunga G."/>
            <person name="Toriumi M.J."/>
            <person name="Town C.D."/>
            <person name="Utterback T."/>
            <person name="Van Aken S."/>
            <person name="Vaysberg M."/>
            <person name="Vysotskaia V.S."/>
            <person name="Walker M."/>
            <person name="Wu D."/>
            <person name="Yu G."/>
            <person name="Fraser C.M."/>
            <person name="Venter J.C."/>
            <person name="Davis R.W."/>
        </authorList>
    </citation>
    <scope>NUCLEOTIDE SEQUENCE [LARGE SCALE GENOMIC DNA]</scope>
    <source>
        <strain>cv. Columbia</strain>
    </source>
</reference>
<reference key="3">
    <citation type="journal article" date="2017" name="Plant J.">
        <title>Araport11: a complete reannotation of the Arabidopsis thaliana reference genome.</title>
        <authorList>
            <person name="Cheng C.Y."/>
            <person name="Krishnakumar V."/>
            <person name="Chan A.P."/>
            <person name="Thibaud-Nissen F."/>
            <person name="Schobel S."/>
            <person name="Town C.D."/>
        </authorList>
    </citation>
    <scope>GENOME REANNOTATION</scope>
    <source>
        <strain>cv. Columbia</strain>
    </source>
</reference>
<reference key="4">
    <citation type="journal article" date="2003" name="Science">
        <title>Empirical analysis of transcriptional activity in the Arabidopsis genome.</title>
        <authorList>
            <person name="Yamada K."/>
            <person name="Lim J."/>
            <person name="Dale J.M."/>
            <person name="Chen H."/>
            <person name="Shinn P."/>
            <person name="Palm C.J."/>
            <person name="Southwick A.M."/>
            <person name="Wu H.C."/>
            <person name="Kim C.J."/>
            <person name="Nguyen M."/>
            <person name="Pham P.K."/>
            <person name="Cheuk R.F."/>
            <person name="Karlin-Newmann G."/>
            <person name="Liu S.X."/>
            <person name="Lam B."/>
            <person name="Sakano H."/>
            <person name="Wu T."/>
            <person name="Yu G."/>
            <person name="Miranda M."/>
            <person name="Quach H.L."/>
            <person name="Tripp M."/>
            <person name="Chang C.H."/>
            <person name="Lee J.M."/>
            <person name="Toriumi M.J."/>
            <person name="Chan M.M."/>
            <person name="Tang C.C."/>
            <person name="Onodera C.S."/>
            <person name="Deng J.M."/>
            <person name="Akiyama K."/>
            <person name="Ansari Y."/>
            <person name="Arakawa T."/>
            <person name="Banh J."/>
            <person name="Banno F."/>
            <person name="Bowser L."/>
            <person name="Brooks S.Y."/>
            <person name="Carninci P."/>
            <person name="Chao Q."/>
            <person name="Choy N."/>
            <person name="Enju A."/>
            <person name="Goldsmith A.D."/>
            <person name="Gurjal M."/>
            <person name="Hansen N.F."/>
            <person name="Hayashizaki Y."/>
            <person name="Johnson-Hopson C."/>
            <person name="Hsuan V.W."/>
            <person name="Iida K."/>
            <person name="Karnes M."/>
            <person name="Khan S."/>
            <person name="Koesema E."/>
            <person name="Ishida J."/>
            <person name="Jiang P.X."/>
            <person name="Jones T."/>
            <person name="Kawai J."/>
            <person name="Kamiya A."/>
            <person name="Meyers C."/>
            <person name="Nakajima M."/>
            <person name="Narusaka M."/>
            <person name="Seki M."/>
            <person name="Sakurai T."/>
            <person name="Satou M."/>
            <person name="Tamse R."/>
            <person name="Vaysberg M."/>
            <person name="Wallender E.K."/>
            <person name="Wong C."/>
            <person name="Yamamura Y."/>
            <person name="Yuan S."/>
            <person name="Shinozaki K."/>
            <person name="Davis R.W."/>
            <person name="Theologis A."/>
            <person name="Ecker J.R."/>
        </authorList>
    </citation>
    <scope>NUCLEOTIDE SEQUENCE [LARGE SCALE MRNA]</scope>
    <source>
        <strain>cv. Columbia</strain>
    </source>
</reference>
<reference key="5">
    <citation type="submission" date="2002-03" db="EMBL/GenBank/DDBJ databases">
        <title>Full-length cDNA from Arabidopsis thaliana.</title>
        <authorList>
            <person name="Brover V.V."/>
            <person name="Troukhan M.E."/>
            <person name="Alexandrov N.A."/>
            <person name="Lu Y.-P."/>
            <person name="Flavell R.B."/>
            <person name="Feldmann K.A."/>
        </authorList>
    </citation>
    <scope>NUCLEOTIDE SEQUENCE [LARGE SCALE MRNA]</scope>
</reference>
<reference key="6">
    <citation type="journal article" date="1997" name="Plant Cell">
        <title>Overexpression of an endogenous thionin enhances resistance of Arabidopsis against Fusarium oxysporum.</title>
        <authorList>
            <person name="Epple P."/>
            <person name="Apel K."/>
            <person name="Bohlmann H."/>
        </authorList>
    </citation>
    <scope>FUNCTION</scope>
</reference>
<reference key="7">
    <citation type="journal article" date="1998" name="Plant J.">
        <title>Systemic and local induction of an Arabidopsis thionin gene by wounding and pathogens.</title>
        <authorList>
            <person name="Vignutelli A."/>
            <person name="Wasternack C."/>
            <person name="Apel K."/>
            <person name="Bohlmann H."/>
        </authorList>
    </citation>
    <scope>FUNCTION</scope>
    <scope>TISSUE SPECIFICITY</scope>
    <scope>INDUCTION</scope>
</reference>
<dbReference type="EMBL" id="L41244">
    <property type="protein sequence ID" value="AAC41678.1"/>
    <property type="molecule type" value="mRNA"/>
</dbReference>
<dbReference type="EMBL" id="AC067754">
    <property type="protein sequence ID" value="AAG51790.1"/>
    <property type="status" value="ALT_INIT"/>
    <property type="molecule type" value="Genomic_DNA"/>
</dbReference>
<dbReference type="EMBL" id="CP002684">
    <property type="protein sequence ID" value="AEE35295.1"/>
    <property type="molecule type" value="Genomic_DNA"/>
</dbReference>
<dbReference type="EMBL" id="AY080781">
    <property type="protein sequence ID" value="AAL87264.1"/>
    <property type="molecule type" value="mRNA"/>
</dbReference>
<dbReference type="EMBL" id="AY086595">
    <property type="protein sequence ID" value="AAM63655.1"/>
    <property type="status" value="ALT_INIT"/>
    <property type="molecule type" value="mRNA"/>
</dbReference>
<dbReference type="PIR" id="C96746">
    <property type="entry name" value="C96746"/>
</dbReference>
<dbReference type="RefSeq" id="NP_565038.1">
    <property type="nucleotide sequence ID" value="NM_105885.3"/>
</dbReference>
<dbReference type="SMR" id="Q42596"/>
<dbReference type="FunCoup" id="Q42596">
    <property type="interactions" value="11"/>
</dbReference>
<dbReference type="STRING" id="3702.Q42596"/>
<dbReference type="iPTMnet" id="Q42596"/>
<dbReference type="PaxDb" id="3702-AT1G72260.1"/>
<dbReference type="ProteomicsDB" id="246484"/>
<dbReference type="EnsemblPlants" id="AT1G72260.1">
    <property type="protein sequence ID" value="AT1G72260.1"/>
    <property type="gene ID" value="AT1G72260"/>
</dbReference>
<dbReference type="GeneID" id="843558"/>
<dbReference type="Gramene" id="AT1G72260.1">
    <property type="protein sequence ID" value="AT1G72260.1"/>
    <property type="gene ID" value="AT1G72260"/>
</dbReference>
<dbReference type="KEGG" id="ath:AT1G72260"/>
<dbReference type="Araport" id="AT1G72260"/>
<dbReference type="TAIR" id="AT1G72260">
    <property type="gene designation" value="THI2.1"/>
</dbReference>
<dbReference type="HOGENOM" id="CLU_132328_0_0_1"/>
<dbReference type="InParanoid" id="Q42596"/>
<dbReference type="OMA" id="SANEYCK"/>
<dbReference type="PhylomeDB" id="Q42596"/>
<dbReference type="PRO" id="PR:Q42596"/>
<dbReference type="Proteomes" id="UP000006548">
    <property type="component" value="Chromosome 1"/>
</dbReference>
<dbReference type="ExpressionAtlas" id="Q42596">
    <property type="expression patterns" value="baseline and differential"/>
</dbReference>
<dbReference type="GO" id="GO:0005576">
    <property type="term" value="C:extracellular region"/>
    <property type="evidence" value="ECO:0007669"/>
    <property type="project" value="UniProtKB-SubCell"/>
</dbReference>
<dbReference type="GO" id="GO:0090729">
    <property type="term" value="F:toxin activity"/>
    <property type="evidence" value="ECO:0007669"/>
    <property type="project" value="UniProtKB-KW"/>
</dbReference>
<dbReference type="GO" id="GO:0006952">
    <property type="term" value="P:defense response"/>
    <property type="evidence" value="ECO:0000315"/>
    <property type="project" value="TAIR"/>
</dbReference>
<dbReference type="FunFam" id="3.30.1350.10:FF:000001">
    <property type="entry name" value="Hellethionin-D"/>
    <property type="match status" value="1"/>
</dbReference>
<dbReference type="Gene3D" id="3.30.1350.10">
    <property type="entry name" value="Thionin-like"/>
    <property type="match status" value="1"/>
</dbReference>
<dbReference type="InterPro" id="IPR001010">
    <property type="entry name" value="Thionin"/>
</dbReference>
<dbReference type="InterPro" id="IPR036391">
    <property type="entry name" value="Thionin-like_sf"/>
</dbReference>
<dbReference type="PANTHER" id="PTHR33920">
    <property type="entry name" value="THIONIN-2.1-RELATED"/>
    <property type="match status" value="1"/>
</dbReference>
<dbReference type="PANTHER" id="PTHR33920:SF2">
    <property type="entry name" value="THIONIN-2.1-RELATED"/>
    <property type="match status" value="1"/>
</dbReference>
<dbReference type="Pfam" id="PF00321">
    <property type="entry name" value="Thionin"/>
    <property type="match status" value="1"/>
</dbReference>
<dbReference type="SUPFAM" id="SSF57429">
    <property type="entry name" value="Crambin-like"/>
    <property type="match status" value="1"/>
</dbReference>
<dbReference type="PROSITE" id="PS00271">
    <property type="entry name" value="THIONIN"/>
    <property type="match status" value="1"/>
</dbReference>
<keyword id="KW-1015">Disulfide bond</keyword>
<keyword id="KW-0611">Plant defense</keyword>
<keyword id="KW-1185">Reference proteome</keyword>
<keyword id="KW-0964">Secreted</keyword>
<keyword id="KW-0732">Signal</keyword>
<keyword id="KW-0800">Toxin</keyword>
<evidence type="ECO:0000250" key="1">
    <source>
        <dbReference type="UniProtKB" id="P08943"/>
    </source>
</evidence>
<evidence type="ECO:0000255" key="2"/>
<evidence type="ECO:0000269" key="3">
    <source>
    </source>
</evidence>
<evidence type="ECO:0000269" key="4">
    <source>
    </source>
</evidence>
<evidence type="ECO:0000269" key="5">
    <source>
    </source>
</evidence>
<evidence type="ECO:0000305" key="6"/>
<feature type="signal peptide" evidence="2">
    <location>
        <begin position="1"/>
        <end position="24"/>
    </location>
</feature>
<feature type="chain" id="PRO_0000034139" description="Thionin-2.1">
    <location>
        <begin position="25"/>
        <end position="67"/>
    </location>
</feature>
<feature type="propeptide" id="PRO_0000459421" description="Acidic domain" evidence="6">
    <location>
        <begin position="68"/>
        <end position="134"/>
    </location>
</feature>
<feature type="disulfide bond" evidence="1">
    <location>
        <begin position="27"/>
        <end position="61"/>
    </location>
</feature>
<feature type="disulfide bond" evidence="1">
    <location>
        <begin position="28"/>
        <end position="55"/>
    </location>
</feature>
<feature type="disulfide bond" evidence="1">
    <location>
        <begin position="40"/>
        <end position="49"/>
    </location>
</feature>
<feature type="sequence conflict" description="In Ref. 5; AAM63655." evidence="6" ref="5">
    <original>A</original>
    <variation>G</variation>
    <location>
        <position position="74"/>
    </location>
</feature>